<organism>
    <name type="scientific">Arabidopsis thaliana</name>
    <name type="common">Mouse-ear cress</name>
    <dbReference type="NCBI Taxonomy" id="3702"/>
    <lineage>
        <taxon>Eukaryota</taxon>
        <taxon>Viridiplantae</taxon>
        <taxon>Streptophyta</taxon>
        <taxon>Embryophyta</taxon>
        <taxon>Tracheophyta</taxon>
        <taxon>Spermatophyta</taxon>
        <taxon>Magnoliopsida</taxon>
        <taxon>eudicotyledons</taxon>
        <taxon>Gunneridae</taxon>
        <taxon>Pentapetalae</taxon>
        <taxon>rosids</taxon>
        <taxon>malvids</taxon>
        <taxon>Brassicales</taxon>
        <taxon>Brassicaceae</taxon>
        <taxon>Camelineae</taxon>
        <taxon>Arabidopsis</taxon>
    </lineage>
</organism>
<keyword id="KW-0025">Alternative splicing</keyword>
<keyword id="KW-0031">Aminopeptidase</keyword>
<keyword id="KW-0378">Hydrolase</keyword>
<keyword id="KW-0464">Manganese</keyword>
<keyword id="KW-0479">Metal-binding</keyword>
<keyword id="KW-0482">Metalloprotease</keyword>
<keyword id="KW-0496">Mitochondrion</keyword>
<keyword id="KW-0539">Nucleus</keyword>
<keyword id="KW-0645">Protease</keyword>
<keyword id="KW-1185">Reference proteome</keyword>
<keyword id="KW-0809">Transit peptide</keyword>
<protein>
    <recommendedName>
        <fullName evidence="7">Intermediate cleaving peptidase 55, mitochondrial</fullName>
        <ecNumber evidence="7">3.4.11.-</ecNumber>
    </recommendedName>
    <alternativeName>
        <fullName evidence="5">AtICP55</fullName>
    </alternativeName>
    <alternativeName>
        <fullName evidence="6">Protein INTERMEDIATE CLEAVAGE PEPTIDASE 55</fullName>
    </alternativeName>
</protein>
<comment type="function">
    <text evidence="2 3 4">Aminopeptidase which cleaves preprotein intermediates that carry destabilizing N-ter amino acid residues after the mitochondrial processing peptidase (MPP) cleavage site and is thus critical for stabilization of the mitochondrial proteome.</text>
</comment>
<comment type="cofactor">
    <cofactor evidence="7">
        <name>Mn(2+)</name>
        <dbReference type="ChEBI" id="CHEBI:29035"/>
    </cofactor>
    <text evidence="7">Binds 2 manganese ions per subunit.</text>
</comment>
<comment type="subcellular location">
    <molecule>Isoform 1</molecule>
    <subcellularLocation>
        <location evidence="2">Mitochondrion</location>
    </subcellularLocation>
</comment>
<comment type="subcellular location">
    <molecule>Isoform 2</molecule>
    <subcellularLocation>
        <location evidence="2">Nucleus</location>
    </subcellularLocation>
</comment>
<comment type="alternative products">
    <event type="alternative splicing"/>
    <isoform>
        <id>F4HZG9-1</id>
        <name>1</name>
        <sequence type="displayed"/>
    </isoform>
    <isoform>
        <id>F4HZG9-2</id>
        <name>2</name>
        <sequence type="described" ref="VSP_059054"/>
    </isoform>
</comment>
<comment type="disruption phenotype">
    <text evidence="3 4">No visible phenotype (PubMed:28936218). Altered mitochondrial protein stability (PubMed:25862457).</text>
</comment>
<comment type="similarity">
    <text evidence="7">Belongs to the peptidase M24B family.</text>
</comment>
<comment type="sequence caution" evidence="7">
    <conflict type="erroneous gene model prediction">
        <sequence resource="EMBL-CDS" id="AAD18095"/>
    </conflict>
</comment>
<comment type="sequence caution" evidence="7">
    <conflict type="frameshift">
        <sequence resource="EMBL-CDS" id="AHJ59463"/>
    </conflict>
</comment>
<comment type="sequence caution" evidence="7">
    <conflict type="frameshift">
        <sequence resource="EMBL-CDS" id="BAC42121"/>
    </conflict>
</comment>
<accession>F4HZG9</accession>
<accession>F4HZH0</accession>
<accession>Q8GYQ0</accession>
<accession>Q9ZPZ5</accession>
<accession>W6HYK5</accession>
<evidence type="ECO:0000255" key="1"/>
<evidence type="ECO:0000269" key="2">
    <source>
    </source>
</evidence>
<evidence type="ECO:0000269" key="3">
    <source>
    </source>
</evidence>
<evidence type="ECO:0000269" key="4">
    <source>
    </source>
</evidence>
<evidence type="ECO:0000303" key="5">
    <source>
    </source>
</evidence>
<evidence type="ECO:0000303" key="6">
    <source>
    </source>
</evidence>
<evidence type="ECO:0000305" key="7"/>
<evidence type="ECO:0000312" key="8">
    <source>
        <dbReference type="Araport" id="AT1G09300"/>
    </source>
</evidence>
<evidence type="ECO:0000312" key="9">
    <source>
        <dbReference type="EMBL" id="AAD18095.1"/>
    </source>
</evidence>
<evidence type="ECO:0000312" key="10">
    <source>
        <dbReference type="EMBL" id="AHJ59463.1"/>
    </source>
</evidence>
<proteinExistence type="evidence at protein level"/>
<name>ICP55_ARATH</name>
<dbReference type="EC" id="3.4.11.-" evidence="7"/>
<dbReference type="EMBL" id="KF921304">
    <property type="protein sequence ID" value="AHJ59463.1"/>
    <property type="status" value="ALT_FRAME"/>
    <property type="molecule type" value="mRNA"/>
</dbReference>
<dbReference type="EMBL" id="AC006416">
    <property type="protein sequence ID" value="AAD18095.1"/>
    <property type="status" value="ALT_SEQ"/>
    <property type="molecule type" value="Genomic_DNA"/>
</dbReference>
<dbReference type="EMBL" id="CP002684">
    <property type="protein sequence ID" value="AEE28426.1"/>
    <property type="molecule type" value="Genomic_DNA"/>
</dbReference>
<dbReference type="EMBL" id="CP002684">
    <property type="protein sequence ID" value="AEE28427.1"/>
    <property type="molecule type" value="Genomic_DNA"/>
</dbReference>
<dbReference type="EMBL" id="AK117456">
    <property type="protein sequence ID" value="BAC42121.1"/>
    <property type="status" value="ALT_FRAME"/>
    <property type="molecule type" value="mRNA"/>
</dbReference>
<dbReference type="PIR" id="A86226">
    <property type="entry name" value="A86226"/>
</dbReference>
<dbReference type="RefSeq" id="NP_001117254.1">
    <molecule id="F4HZG9-2"/>
    <property type="nucleotide sequence ID" value="NM_001123782.1"/>
</dbReference>
<dbReference type="RefSeq" id="NP_172401.2">
    <molecule id="F4HZG9-1"/>
    <property type="nucleotide sequence ID" value="NM_100800.4"/>
</dbReference>
<dbReference type="SMR" id="F4HZG9"/>
<dbReference type="FunCoup" id="F4HZG9">
    <property type="interactions" value="1796"/>
</dbReference>
<dbReference type="STRING" id="3702.F4HZG9"/>
<dbReference type="MEROPS" id="M24.A14"/>
<dbReference type="PaxDb" id="3702-AT1G09300.1"/>
<dbReference type="ProteomicsDB" id="228766">
    <molecule id="F4HZG9-1"/>
</dbReference>
<dbReference type="EnsemblPlants" id="AT1G09300.1">
    <molecule id="F4HZG9-1"/>
    <property type="protein sequence ID" value="AT1G09300.1"/>
    <property type="gene ID" value="AT1G09300"/>
</dbReference>
<dbReference type="EnsemblPlants" id="AT1G09300.2">
    <molecule id="F4HZG9-2"/>
    <property type="protein sequence ID" value="AT1G09300.2"/>
    <property type="gene ID" value="AT1G09300"/>
</dbReference>
<dbReference type="GeneID" id="837451"/>
<dbReference type="Gramene" id="AT1G09300.1">
    <molecule id="F4HZG9-1"/>
    <property type="protein sequence ID" value="AT1G09300.1"/>
    <property type="gene ID" value="AT1G09300"/>
</dbReference>
<dbReference type="Gramene" id="AT1G09300.2">
    <molecule id="F4HZG9-2"/>
    <property type="protein sequence ID" value="AT1G09300.2"/>
    <property type="gene ID" value="AT1G09300"/>
</dbReference>
<dbReference type="KEGG" id="ath:AT1G09300"/>
<dbReference type="Araport" id="AT1G09300"/>
<dbReference type="TAIR" id="AT1G09300">
    <property type="gene designation" value="ATICP55"/>
</dbReference>
<dbReference type="eggNOG" id="KOG2414">
    <property type="taxonomic scope" value="Eukaryota"/>
</dbReference>
<dbReference type="InParanoid" id="F4HZG9"/>
<dbReference type="OMA" id="DSYFWYL"/>
<dbReference type="BRENDA" id="3.4.11.26">
    <property type="organism ID" value="399"/>
</dbReference>
<dbReference type="BRENDA" id="3.4.24.59">
    <property type="organism ID" value="399"/>
</dbReference>
<dbReference type="PRO" id="PR:F4HZG9"/>
<dbReference type="Proteomes" id="UP000006548">
    <property type="component" value="Chromosome 1"/>
</dbReference>
<dbReference type="ExpressionAtlas" id="F4HZG9">
    <property type="expression patterns" value="baseline and differential"/>
</dbReference>
<dbReference type="GO" id="GO:0005739">
    <property type="term" value="C:mitochondrion"/>
    <property type="evidence" value="ECO:0000314"/>
    <property type="project" value="UniProtKB"/>
</dbReference>
<dbReference type="GO" id="GO:0005634">
    <property type="term" value="C:nucleus"/>
    <property type="evidence" value="ECO:0000314"/>
    <property type="project" value="UniProtKB"/>
</dbReference>
<dbReference type="GO" id="GO:0004177">
    <property type="term" value="F:aminopeptidase activity"/>
    <property type="evidence" value="ECO:0000314"/>
    <property type="project" value="UniProtKB"/>
</dbReference>
<dbReference type="GO" id="GO:0030145">
    <property type="term" value="F:manganese ion binding"/>
    <property type="evidence" value="ECO:0007669"/>
    <property type="project" value="InterPro"/>
</dbReference>
<dbReference type="GO" id="GO:0070006">
    <property type="term" value="F:metalloaminopeptidase activity"/>
    <property type="evidence" value="ECO:0007669"/>
    <property type="project" value="InterPro"/>
</dbReference>
<dbReference type="GO" id="GO:0008233">
    <property type="term" value="F:peptidase activity"/>
    <property type="evidence" value="ECO:0000315"/>
    <property type="project" value="TAIR"/>
</dbReference>
<dbReference type="GO" id="GO:0050821">
    <property type="term" value="P:protein stabilization"/>
    <property type="evidence" value="ECO:0000315"/>
    <property type="project" value="TAIR"/>
</dbReference>
<dbReference type="GO" id="GO:0006508">
    <property type="term" value="P:proteolysis"/>
    <property type="evidence" value="ECO:0000316"/>
    <property type="project" value="TAIR"/>
</dbReference>
<dbReference type="CDD" id="cd01087">
    <property type="entry name" value="Prolidase"/>
    <property type="match status" value="1"/>
</dbReference>
<dbReference type="FunFam" id="3.40.350.10:FF:000041">
    <property type="entry name" value="Intermediate cleaving peptidase 55, mitochondrial"/>
    <property type="match status" value="1"/>
</dbReference>
<dbReference type="FunFam" id="3.90.230.10:FF:000002">
    <property type="entry name" value="Xaa-Pro aminopeptidase 3"/>
    <property type="match status" value="1"/>
</dbReference>
<dbReference type="Gene3D" id="3.90.230.10">
    <property type="entry name" value="Creatinase/methionine aminopeptidase superfamily"/>
    <property type="match status" value="1"/>
</dbReference>
<dbReference type="Gene3D" id="3.40.350.10">
    <property type="entry name" value="Creatinase/prolidase N-terminal domain"/>
    <property type="match status" value="1"/>
</dbReference>
<dbReference type="InterPro" id="IPR007865">
    <property type="entry name" value="Aminopep_P_N"/>
</dbReference>
<dbReference type="InterPro" id="IPR029149">
    <property type="entry name" value="Creatin/AminoP/Spt16_N"/>
</dbReference>
<dbReference type="InterPro" id="IPR036005">
    <property type="entry name" value="Creatinase/aminopeptidase-like"/>
</dbReference>
<dbReference type="InterPro" id="IPR000994">
    <property type="entry name" value="Pept_M24"/>
</dbReference>
<dbReference type="InterPro" id="IPR001714">
    <property type="entry name" value="Pept_M24_MAP"/>
</dbReference>
<dbReference type="InterPro" id="IPR052433">
    <property type="entry name" value="X-Pro_dipept-like"/>
</dbReference>
<dbReference type="PANTHER" id="PTHR43226">
    <property type="entry name" value="XAA-PRO AMINOPEPTIDASE 3"/>
    <property type="match status" value="1"/>
</dbReference>
<dbReference type="PANTHER" id="PTHR43226:SF4">
    <property type="entry name" value="XAA-PRO AMINOPEPTIDASE 3"/>
    <property type="match status" value="1"/>
</dbReference>
<dbReference type="Pfam" id="PF05195">
    <property type="entry name" value="AMP_N"/>
    <property type="match status" value="1"/>
</dbReference>
<dbReference type="Pfam" id="PF00557">
    <property type="entry name" value="Peptidase_M24"/>
    <property type="match status" value="1"/>
</dbReference>
<dbReference type="PRINTS" id="PR00599">
    <property type="entry name" value="MAPEPTIDASE"/>
</dbReference>
<dbReference type="SMART" id="SM01011">
    <property type="entry name" value="AMP_N"/>
    <property type="match status" value="1"/>
</dbReference>
<dbReference type="SUPFAM" id="SSF55920">
    <property type="entry name" value="Creatinase/aminopeptidase"/>
    <property type="match status" value="1"/>
</dbReference>
<dbReference type="SUPFAM" id="SSF53092">
    <property type="entry name" value="Creatinase/prolidase N-terminal domain"/>
    <property type="match status" value="1"/>
</dbReference>
<gene>
    <name evidence="5 10" type="primary">ICP55</name>
    <name evidence="8" type="ordered locus">At1g09300</name>
    <name evidence="9" type="ORF">T31J12.2</name>
</gene>
<feature type="transit peptide" description="Mitochondrion" evidence="1">
    <location>
        <begin position="1"/>
        <end position="19"/>
    </location>
</feature>
<feature type="chain" id="PRO_0000441250" description="Intermediate cleaving peptidase 55, mitochondrial" evidence="1">
    <location>
        <begin position="20"/>
        <end position="493"/>
    </location>
</feature>
<feature type="binding site" evidence="1">
    <location>
        <position position="296"/>
    </location>
    <ligand>
        <name>Mn(2+)</name>
        <dbReference type="ChEBI" id="CHEBI:29035"/>
        <label>2</label>
    </ligand>
</feature>
<feature type="binding site" evidence="1">
    <location>
        <position position="307"/>
    </location>
    <ligand>
        <name>Mn(2+)</name>
        <dbReference type="ChEBI" id="CHEBI:29035"/>
        <label>1</label>
    </ligand>
</feature>
<feature type="binding site" evidence="1">
    <location>
        <position position="307"/>
    </location>
    <ligand>
        <name>Mn(2+)</name>
        <dbReference type="ChEBI" id="CHEBI:29035"/>
        <label>2</label>
    </ligand>
</feature>
<feature type="binding site" evidence="1">
    <location>
        <position position="383"/>
    </location>
    <ligand>
        <name>Mn(2+)</name>
        <dbReference type="ChEBI" id="CHEBI:29035"/>
        <label>1</label>
    </ligand>
</feature>
<feature type="binding site" evidence="1">
    <location>
        <position position="410"/>
    </location>
    <ligand>
        <name>Mn(2+)</name>
        <dbReference type="ChEBI" id="CHEBI:29035"/>
        <label>1</label>
    </ligand>
</feature>
<feature type="binding site" evidence="1">
    <location>
        <position position="433"/>
    </location>
    <ligand>
        <name>Mn(2+)</name>
        <dbReference type="ChEBI" id="CHEBI:29035"/>
        <label>1</label>
    </ligand>
</feature>
<feature type="binding site" evidence="1">
    <location>
        <position position="433"/>
    </location>
    <ligand>
        <name>Mn(2+)</name>
        <dbReference type="ChEBI" id="CHEBI:29035"/>
        <label>2</label>
    </ligand>
</feature>
<feature type="splice variant" id="VSP_059054" description="In isoform 2.">
    <original>MQFLARNLVRRVSRTQVVSRNAYSTQTVRDIGQPTPASHPH</original>
    <variation>MLRWFALPHQ</variation>
    <location>
        <begin position="1"/>
        <end position="41"/>
    </location>
</feature>
<feature type="sequence conflict" description="In Ref. 4; BAC42121." evidence="7" ref="4">
    <original>D</original>
    <variation>G</variation>
    <location>
        <position position="398"/>
    </location>
</feature>
<reference key="1">
    <citation type="journal article" date="2015" name="Plant Physiol.">
        <title>INTERMEDIATE CLEAVAGE PEPTIDASE55 modifies enzyme amino termini and alters protein stability in Arabidopsis mitochondria.</title>
        <authorList>
            <person name="Huang S."/>
            <person name="Nelson C.J."/>
            <person name="Li L."/>
            <person name="Taylor N.L."/>
            <person name="Stroeher E."/>
            <person name="Peteriet J."/>
            <person name="Millar A.H."/>
        </authorList>
    </citation>
    <scope>NUCLEOTIDE SEQUENCE [MRNA] (ISOFORM 1)</scope>
    <scope>FUNCTION</scope>
    <scope>DISRUPTION PHENOTYPE</scope>
    <scope>IDENTIFICATION BY MASS SPECTROMETRY</scope>
</reference>
<reference key="2">
    <citation type="journal article" date="2000" name="Nature">
        <title>Sequence and analysis of chromosome 1 of the plant Arabidopsis thaliana.</title>
        <authorList>
            <person name="Theologis A."/>
            <person name="Ecker J.R."/>
            <person name="Palm C.J."/>
            <person name="Federspiel N.A."/>
            <person name="Kaul S."/>
            <person name="White O."/>
            <person name="Alonso J."/>
            <person name="Altafi H."/>
            <person name="Araujo R."/>
            <person name="Bowman C.L."/>
            <person name="Brooks S.Y."/>
            <person name="Buehler E."/>
            <person name="Chan A."/>
            <person name="Chao Q."/>
            <person name="Chen H."/>
            <person name="Cheuk R.F."/>
            <person name="Chin C.W."/>
            <person name="Chung M.K."/>
            <person name="Conn L."/>
            <person name="Conway A.B."/>
            <person name="Conway A.R."/>
            <person name="Creasy T.H."/>
            <person name="Dewar K."/>
            <person name="Dunn P."/>
            <person name="Etgu P."/>
            <person name="Feldblyum T.V."/>
            <person name="Feng J.-D."/>
            <person name="Fong B."/>
            <person name="Fujii C.Y."/>
            <person name="Gill J.E."/>
            <person name="Goldsmith A.D."/>
            <person name="Haas B."/>
            <person name="Hansen N.F."/>
            <person name="Hughes B."/>
            <person name="Huizar L."/>
            <person name="Hunter J.L."/>
            <person name="Jenkins J."/>
            <person name="Johnson-Hopson C."/>
            <person name="Khan S."/>
            <person name="Khaykin E."/>
            <person name="Kim C.J."/>
            <person name="Koo H.L."/>
            <person name="Kremenetskaia I."/>
            <person name="Kurtz D.B."/>
            <person name="Kwan A."/>
            <person name="Lam B."/>
            <person name="Langin-Hooper S."/>
            <person name="Lee A."/>
            <person name="Lee J.M."/>
            <person name="Lenz C.A."/>
            <person name="Li J.H."/>
            <person name="Li Y.-P."/>
            <person name="Lin X."/>
            <person name="Liu S.X."/>
            <person name="Liu Z.A."/>
            <person name="Luros J.S."/>
            <person name="Maiti R."/>
            <person name="Marziali A."/>
            <person name="Militscher J."/>
            <person name="Miranda M."/>
            <person name="Nguyen M."/>
            <person name="Nierman W.C."/>
            <person name="Osborne B.I."/>
            <person name="Pai G."/>
            <person name="Peterson J."/>
            <person name="Pham P.K."/>
            <person name="Rizzo M."/>
            <person name="Rooney T."/>
            <person name="Rowley D."/>
            <person name="Sakano H."/>
            <person name="Salzberg S.L."/>
            <person name="Schwartz J.R."/>
            <person name="Shinn P."/>
            <person name="Southwick A.M."/>
            <person name="Sun H."/>
            <person name="Tallon L.J."/>
            <person name="Tambunga G."/>
            <person name="Toriumi M.J."/>
            <person name="Town C.D."/>
            <person name="Utterback T."/>
            <person name="Van Aken S."/>
            <person name="Vaysberg M."/>
            <person name="Vysotskaia V.S."/>
            <person name="Walker M."/>
            <person name="Wu D."/>
            <person name="Yu G."/>
            <person name="Fraser C.M."/>
            <person name="Venter J.C."/>
            <person name="Davis R.W."/>
        </authorList>
    </citation>
    <scope>NUCLEOTIDE SEQUENCE [LARGE SCALE GENOMIC DNA]</scope>
    <source>
        <strain>cv. Columbia</strain>
    </source>
</reference>
<reference key="3">
    <citation type="journal article" date="2017" name="Plant J.">
        <title>Araport11: a complete reannotation of the Arabidopsis thaliana reference genome.</title>
        <authorList>
            <person name="Cheng C.Y."/>
            <person name="Krishnakumar V."/>
            <person name="Chan A.P."/>
            <person name="Thibaud-Nissen F."/>
            <person name="Schobel S."/>
            <person name="Town C.D."/>
        </authorList>
    </citation>
    <scope>GENOME REANNOTATION</scope>
    <source>
        <strain>cv. Columbia</strain>
    </source>
</reference>
<reference key="4">
    <citation type="journal article" date="2002" name="Science">
        <title>Functional annotation of a full-length Arabidopsis cDNA collection.</title>
        <authorList>
            <person name="Seki M."/>
            <person name="Narusaka M."/>
            <person name="Kamiya A."/>
            <person name="Ishida J."/>
            <person name="Satou M."/>
            <person name="Sakurai T."/>
            <person name="Nakajima M."/>
            <person name="Enju A."/>
            <person name="Akiyama K."/>
            <person name="Oono Y."/>
            <person name="Muramatsu M."/>
            <person name="Hayashizaki Y."/>
            <person name="Kawai J."/>
            <person name="Carninci P."/>
            <person name="Itoh M."/>
            <person name="Ishii Y."/>
            <person name="Arakawa T."/>
            <person name="Shibata K."/>
            <person name="Shinagawa A."/>
            <person name="Shinozaki K."/>
        </authorList>
    </citation>
    <scope>NUCLEOTIDE SEQUENCE [LARGE SCALE MRNA] (ISOFORM 1)</scope>
    <source>
        <strain>cv. Columbia</strain>
    </source>
</reference>
<reference key="5">
    <citation type="journal article" date="2012" name="Physiol. Plantarum">
        <title>Proteolytic system of plant mitochondria.</title>
        <authorList>
            <person name="Kwasniak M."/>
            <person name="Pogorzelec L."/>
            <person name="Migdal I."/>
            <person name="Smakowska E."/>
            <person name="Janska H."/>
        </authorList>
    </citation>
    <scope>IDENTIFICATION</scope>
    <scope>REVIEW OF MITOCHONDRIAL PROTEOLYTIC SYSTEM</scope>
</reference>
<reference key="6">
    <citation type="journal article" date="2013" name="Biochim. Biophys. Acta">
        <title>Processing peptidases in mitochondria and chloroplasts.</title>
        <authorList>
            <person name="Teixeira P.F."/>
            <person name="Glaser E."/>
        </authorList>
    </citation>
    <scope>REVIEW</scope>
</reference>
<reference key="7">
    <citation type="journal article" date="2015" name="J. Exp. Bot.">
        <title>Identification of cleavage sites and substrate proteins for two mitochondrial intermediate peptidases in Arabidopsis thaliana.</title>
        <authorList>
            <person name="Carrie C."/>
            <person name="Venne A.S."/>
            <person name="Zahedi R.P."/>
            <person name="Soll J."/>
        </authorList>
    </citation>
    <scope>SUBCELLULAR LOCATION</scope>
    <scope>FUNCTION</scope>
</reference>
<reference key="8">
    <citation type="journal article" date="2017" name="Front. Plant Sci.">
        <title>AtOMA1 affects the OXPHOS system and plant growth in contrast to other newly identified ATP-independent proteases in Arabidopsis mitochondria.</title>
        <authorList>
            <person name="Migdal I."/>
            <person name="Skibior-Blaszczyk R."/>
            <person name="Heidorn-Czarna M."/>
            <person name="Kolodziejczak M."/>
            <person name="Garbiec A."/>
            <person name="Janska H."/>
        </authorList>
    </citation>
    <scope>FUNCTION</scope>
    <scope>DISRUPTION PHENOTYPE</scope>
    <source>
        <strain>cv. Columbia</strain>
    </source>
</reference>
<sequence>MQFLARNLVRRVSRTQVVSRNAYSTQTVRDIGQPTPASHPHLMAEGEVTPGIRIEEYIGRRKKLVELLPENSLAIISSAPVKMMTDVVPYTFRQDADYLYLTGCQQPGGVAVLSDERGLCMFMPESTPKDIAWEGEVAGVDAASEVFKADQAYPISKLPEILSDMIRHSSKVFHNVQSASQRYTNLDDFQNSASLGKVKTLSSLTHELRLIKSPAELKLMRESASIACQGLLKTMLHSKGFPDEGILSAQVEYECRVRGAQRMAFNPVVGGGSNASVIHYSRNDQRIKDGDLVLMDMGCELHGYVSDLTRTWPPCGKFSSVQEELYDLILQTNKECIKQCKPGTTIRQLNTYSTELLCDGLMKMGILKSRRLYHQLNPTSIGHYLGMDVHDSSAVGYDRPLQPGFVITIEPGVYIPSSFDCPERFQGIGIRIEDDVLITETGYEVLTGSMPKEIKHIETLLNNHCHDNSARTSPVSLCKVKGLHTNRNPRRLF</sequence>